<reference evidence="8 10" key="1">
    <citation type="journal article" date="2002" name="J. Biol. Chem.">
        <title>Growth retardation, polyploidy, and multinucleation induced by Clast3, a novel cell cycle-regulated protein.</title>
        <authorList>
            <person name="Bahar R."/>
            <person name="O-Wang J."/>
            <person name="Kawamura K."/>
            <person name="Seimiya M."/>
            <person name="Wang Y."/>
            <person name="Hatano M."/>
            <person name="Okada S."/>
            <person name="Tokuhisa T."/>
            <person name="Watanabe T."/>
            <person name="Tagawa M."/>
        </authorList>
    </citation>
    <scope>NUCLEOTIDE SEQUENCE [MRNA] (ISOFORM 1)</scope>
    <scope>SUBCELLULAR LOCATION</scope>
    <scope>DEVELOPMENTAL STAGE</scope>
</reference>
<reference evidence="8 12" key="2">
    <citation type="journal article" date="2005" name="Science">
        <title>The transcriptional landscape of the mammalian genome.</title>
        <authorList>
            <person name="Carninci P."/>
            <person name="Kasukawa T."/>
            <person name="Katayama S."/>
            <person name="Gough J."/>
            <person name="Frith M.C."/>
            <person name="Maeda N."/>
            <person name="Oyama R."/>
            <person name="Ravasi T."/>
            <person name="Lenhard B."/>
            <person name="Wells C."/>
            <person name="Kodzius R."/>
            <person name="Shimokawa K."/>
            <person name="Bajic V.B."/>
            <person name="Brenner S.E."/>
            <person name="Batalov S."/>
            <person name="Forrest A.R."/>
            <person name="Zavolan M."/>
            <person name="Davis M.J."/>
            <person name="Wilming L.G."/>
            <person name="Aidinis V."/>
            <person name="Allen J.E."/>
            <person name="Ambesi-Impiombato A."/>
            <person name="Apweiler R."/>
            <person name="Aturaliya R.N."/>
            <person name="Bailey T.L."/>
            <person name="Bansal M."/>
            <person name="Baxter L."/>
            <person name="Beisel K.W."/>
            <person name="Bersano T."/>
            <person name="Bono H."/>
            <person name="Chalk A.M."/>
            <person name="Chiu K.P."/>
            <person name="Choudhary V."/>
            <person name="Christoffels A."/>
            <person name="Clutterbuck D.R."/>
            <person name="Crowe M.L."/>
            <person name="Dalla E."/>
            <person name="Dalrymple B.P."/>
            <person name="de Bono B."/>
            <person name="Della Gatta G."/>
            <person name="di Bernardo D."/>
            <person name="Down T."/>
            <person name="Engstrom P."/>
            <person name="Fagiolini M."/>
            <person name="Faulkner G."/>
            <person name="Fletcher C.F."/>
            <person name="Fukushima T."/>
            <person name="Furuno M."/>
            <person name="Futaki S."/>
            <person name="Gariboldi M."/>
            <person name="Georgii-Hemming P."/>
            <person name="Gingeras T.R."/>
            <person name="Gojobori T."/>
            <person name="Green R.E."/>
            <person name="Gustincich S."/>
            <person name="Harbers M."/>
            <person name="Hayashi Y."/>
            <person name="Hensch T.K."/>
            <person name="Hirokawa N."/>
            <person name="Hill D."/>
            <person name="Huminiecki L."/>
            <person name="Iacono M."/>
            <person name="Ikeo K."/>
            <person name="Iwama A."/>
            <person name="Ishikawa T."/>
            <person name="Jakt M."/>
            <person name="Kanapin A."/>
            <person name="Katoh M."/>
            <person name="Kawasawa Y."/>
            <person name="Kelso J."/>
            <person name="Kitamura H."/>
            <person name="Kitano H."/>
            <person name="Kollias G."/>
            <person name="Krishnan S.P."/>
            <person name="Kruger A."/>
            <person name="Kummerfeld S.K."/>
            <person name="Kurochkin I.V."/>
            <person name="Lareau L.F."/>
            <person name="Lazarevic D."/>
            <person name="Lipovich L."/>
            <person name="Liu J."/>
            <person name="Liuni S."/>
            <person name="McWilliam S."/>
            <person name="Madan Babu M."/>
            <person name="Madera M."/>
            <person name="Marchionni L."/>
            <person name="Matsuda H."/>
            <person name="Matsuzawa S."/>
            <person name="Miki H."/>
            <person name="Mignone F."/>
            <person name="Miyake S."/>
            <person name="Morris K."/>
            <person name="Mottagui-Tabar S."/>
            <person name="Mulder N."/>
            <person name="Nakano N."/>
            <person name="Nakauchi H."/>
            <person name="Ng P."/>
            <person name="Nilsson R."/>
            <person name="Nishiguchi S."/>
            <person name="Nishikawa S."/>
            <person name="Nori F."/>
            <person name="Ohara O."/>
            <person name="Okazaki Y."/>
            <person name="Orlando V."/>
            <person name="Pang K.C."/>
            <person name="Pavan W.J."/>
            <person name="Pavesi G."/>
            <person name="Pesole G."/>
            <person name="Petrovsky N."/>
            <person name="Piazza S."/>
            <person name="Reed J."/>
            <person name="Reid J.F."/>
            <person name="Ring B.Z."/>
            <person name="Ringwald M."/>
            <person name="Rost B."/>
            <person name="Ruan Y."/>
            <person name="Salzberg S.L."/>
            <person name="Sandelin A."/>
            <person name="Schneider C."/>
            <person name="Schoenbach C."/>
            <person name="Sekiguchi K."/>
            <person name="Semple C.A."/>
            <person name="Seno S."/>
            <person name="Sessa L."/>
            <person name="Sheng Y."/>
            <person name="Shibata Y."/>
            <person name="Shimada H."/>
            <person name="Shimada K."/>
            <person name="Silva D."/>
            <person name="Sinclair B."/>
            <person name="Sperling S."/>
            <person name="Stupka E."/>
            <person name="Sugiura K."/>
            <person name="Sultana R."/>
            <person name="Takenaka Y."/>
            <person name="Taki K."/>
            <person name="Tammoja K."/>
            <person name="Tan S.L."/>
            <person name="Tang S."/>
            <person name="Taylor M.S."/>
            <person name="Tegner J."/>
            <person name="Teichmann S.A."/>
            <person name="Ueda H.R."/>
            <person name="van Nimwegen E."/>
            <person name="Verardo R."/>
            <person name="Wei C.L."/>
            <person name="Yagi K."/>
            <person name="Yamanishi H."/>
            <person name="Zabarovsky E."/>
            <person name="Zhu S."/>
            <person name="Zimmer A."/>
            <person name="Hide W."/>
            <person name="Bult C."/>
            <person name="Grimmond S.M."/>
            <person name="Teasdale R.D."/>
            <person name="Liu E.T."/>
            <person name="Brusic V."/>
            <person name="Quackenbush J."/>
            <person name="Wahlestedt C."/>
            <person name="Mattick J.S."/>
            <person name="Hume D.A."/>
            <person name="Kai C."/>
            <person name="Sasaki D."/>
            <person name="Tomaru Y."/>
            <person name="Fukuda S."/>
            <person name="Kanamori-Katayama M."/>
            <person name="Suzuki M."/>
            <person name="Aoki J."/>
            <person name="Arakawa T."/>
            <person name="Iida J."/>
            <person name="Imamura K."/>
            <person name="Itoh M."/>
            <person name="Kato T."/>
            <person name="Kawaji H."/>
            <person name="Kawagashira N."/>
            <person name="Kawashima T."/>
            <person name="Kojima M."/>
            <person name="Kondo S."/>
            <person name="Konno H."/>
            <person name="Nakano K."/>
            <person name="Ninomiya N."/>
            <person name="Nishio T."/>
            <person name="Okada M."/>
            <person name="Plessy C."/>
            <person name="Shibata K."/>
            <person name="Shiraki T."/>
            <person name="Suzuki S."/>
            <person name="Tagami M."/>
            <person name="Waki K."/>
            <person name="Watahiki A."/>
            <person name="Okamura-Oho Y."/>
            <person name="Suzuki H."/>
            <person name="Kawai J."/>
            <person name="Hayashizaki Y."/>
        </authorList>
    </citation>
    <scope>NUCLEOTIDE SEQUENCE [LARGE SCALE MRNA] (ISOFORMS 1; 2 AND 3)</scope>
    <source>
        <strain evidence="12">C57BL/6J</strain>
        <strain evidence="14">DBA/2J</strain>
        <tissue evidence="12">Embryo</tissue>
        <tissue evidence="13">Embryonic gonad</tissue>
        <tissue evidence="11">Testis</tissue>
        <tissue evidence="14">Thymic lymphoma</tissue>
    </source>
</reference>
<reference evidence="8 9" key="3">
    <citation type="journal article" date="2004" name="Genome Res.">
        <title>The status, quality, and expansion of the NIH full-length cDNA project: the Mammalian Gene Collection (MGC).</title>
        <authorList>
            <consortium name="The MGC Project Team"/>
        </authorList>
    </citation>
    <scope>NUCLEOTIDE SEQUENCE [LARGE SCALE MRNA] (ISOFORM 2)</scope>
    <source>
        <strain evidence="9">Czech II</strain>
        <tissue evidence="9">Mammary tumor</tissue>
    </source>
</reference>
<reference key="4">
    <citation type="journal article" date="2010" name="Cell">
        <title>A tissue-specific atlas of mouse protein phosphorylation and expression.</title>
        <authorList>
            <person name="Huttlin E.L."/>
            <person name="Jedrychowski M.P."/>
            <person name="Elias J.E."/>
            <person name="Goswami T."/>
            <person name="Rad R."/>
            <person name="Beausoleil S.A."/>
            <person name="Villen J."/>
            <person name="Haas W."/>
            <person name="Sowa M.E."/>
            <person name="Gygi S.P."/>
        </authorList>
    </citation>
    <scope>IDENTIFICATION BY MASS SPECTROMETRY [LARGE SCALE ANALYSIS]</scope>
    <source>
        <tissue>Spleen</tissue>
        <tissue>Testis</tissue>
    </source>
</reference>
<keyword id="KW-0025">Alternative splicing</keyword>
<keyword id="KW-0143">Chaperone</keyword>
<keyword id="KW-0539">Nucleus</keyword>
<keyword id="KW-0597">Phosphoprotein</keyword>
<keyword id="KW-1185">Reference proteome</keyword>
<name>PSMG2_MOUSE</name>
<dbReference type="EMBL" id="AB031387">
    <property type="protein sequence ID" value="BAB11962.1"/>
    <property type="molecule type" value="mRNA"/>
</dbReference>
<dbReference type="EMBL" id="AK006069">
    <property type="protein sequence ID" value="BAC25130.2"/>
    <property type="molecule type" value="mRNA"/>
</dbReference>
<dbReference type="EMBL" id="AK077569">
    <property type="protein sequence ID" value="BAC36869.1"/>
    <property type="molecule type" value="mRNA"/>
</dbReference>
<dbReference type="EMBL" id="AK135578">
    <property type="protein sequence ID" value="BAE22586.1"/>
    <property type="molecule type" value="mRNA"/>
</dbReference>
<dbReference type="EMBL" id="AK167840">
    <property type="protein sequence ID" value="BAE39861.1"/>
    <property type="molecule type" value="mRNA"/>
</dbReference>
<dbReference type="EMBL" id="BC016606">
    <property type="protein sequence ID" value="AAH16606.1"/>
    <property type="molecule type" value="mRNA"/>
</dbReference>
<dbReference type="CCDS" id="CCDS29324.1">
    <molecule id="Q9EST4-1"/>
</dbReference>
<dbReference type="CCDS" id="CCDS89268.1">
    <molecule id="Q9EST4-3"/>
</dbReference>
<dbReference type="RefSeq" id="NP_001355076.1">
    <molecule id="Q9EST4-3"/>
    <property type="nucleotide sequence ID" value="NM_001368147.1"/>
</dbReference>
<dbReference type="RefSeq" id="NP_598899.1">
    <molecule id="Q9EST4-1"/>
    <property type="nucleotide sequence ID" value="NM_134138.2"/>
</dbReference>
<dbReference type="SMR" id="Q9EST4"/>
<dbReference type="BioGRID" id="223192">
    <property type="interactions" value="5"/>
</dbReference>
<dbReference type="FunCoup" id="Q9EST4">
    <property type="interactions" value="3284"/>
</dbReference>
<dbReference type="STRING" id="10090.ENSMUSP00000025418"/>
<dbReference type="GlyGen" id="Q9EST4">
    <property type="glycosylation" value="1 site, 1 O-linked glycan (1 site)"/>
</dbReference>
<dbReference type="iPTMnet" id="Q9EST4"/>
<dbReference type="PhosphoSitePlus" id="Q9EST4"/>
<dbReference type="SwissPalm" id="Q9EST4"/>
<dbReference type="jPOST" id="Q9EST4"/>
<dbReference type="PaxDb" id="10090-ENSMUSP00000025418"/>
<dbReference type="PeptideAtlas" id="Q9EST4"/>
<dbReference type="ProteomicsDB" id="301992">
    <molecule id="Q9EST4-1"/>
</dbReference>
<dbReference type="ProteomicsDB" id="301993">
    <molecule id="Q9EST4-2"/>
</dbReference>
<dbReference type="ProteomicsDB" id="301994">
    <molecule id="Q9EST4-3"/>
</dbReference>
<dbReference type="Pumba" id="Q9EST4"/>
<dbReference type="Antibodypedia" id="21950">
    <property type="antibodies" value="266 antibodies from 26 providers"/>
</dbReference>
<dbReference type="DNASU" id="107047"/>
<dbReference type="Ensembl" id="ENSMUST00000025418.4">
    <molecule id="Q9EST4-1"/>
    <property type="protein sequence ID" value="ENSMUSP00000025418.4"/>
    <property type="gene ID" value="ENSMUSG00000024537.6"/>
</dbReference>
<dbReference type="Ensembl" id="ENSMUST00000235799.2">
    <molecule id="Q9EST4-3"/>
    <property type="protein sequence ID" value="ENSMUSP00000157785.2"/>
    <property type="gene ID" value="ENSMUSG00000024537.6"/>
</dbReference>
<dbReference type="GeneID" id="107047"/>
<dbReference type="KEGG" id="mmu:107047"/>
<dbReference type="UCSC" id="uc008fms.1">
    <molecule id="Q9EST4-2"/>
    <property type="organism name" value="mouse"/>
</dbReference>
<dbReference type="UCSC" id="uc008fmt.1">
    <molecule id="Q9EST4-1"/>
    <property type="organism name" value="mouse"/>
</dbReference>
<dbReference type="AGR" id="MGI:1922901"/>
<dbReference type="CTD" id="56984"/>
<dbReference type="MGI" id="MGI:1922901">
    <property type="gene designation" value="Psmg2"/>
</dbReference>
<dbReference type="VEuPathDB" id="HostDB:ENSMUSG00000024537"/>
<dbReference type="eggNOG" id="KOG3112">
    <property type="taxonomic scope" value="Eukaryota"/>
</dbReference>
<dbReference type="GeneTree" id="ENSGT00390000018415"/>
<dbReference type="HOGENOM" id="CLU_062640_1_0_1"/>
<dbReference type="InParanoid" id="Q9EST4"/>
<dbReference type="OMA" id="WKEHTGE"/>
<dbReference type="OrthoDB" id="10260712at2759"/>
<dbReference type="PhylomeDB" id="Q9EST4"/>
<dbReference type="TreeFam" id="TF105397"/>
<dbReference type="Reactome" id="R-MMU-9907900">
    <property type="pathway name" value="Proteasome assembly"/>
</dbReference>
<dbReference type="BioGRID-ORCS" id="107047">
    <property type="hits" value="20 hits in 79 CRISPR screens"/>
</dbReference>
<dbReference type="ChiTaRS" id="Psmg2">
    <property type="organism name" value="mouse"/>
</dbReference>
<dbReference type="PRO" id="PR:Q9EST4"/>
<dbReference type="Proteomes" id="UP000000589">
    <property type="component" value="Chromosome 18"/>
</dbReference>
<dbReference type="RNAct" id="Q9EST4">
    <property type="molecule type" value="protein"/>
</dbReference>
<dbReference type="Bgee" id="ENSMUSG00000024537">
    <property type="expression patterns" value="Expressed in otic placode and 258 other cell types or tissues"/>
</dbReference>
<dbReference type="GO" id="GO:0005634">
    <property type="term" value="C:nucleus"/>
    <property type="evidence" value="ECO:0000314"/>
    <property type="project" value="MGI"/>
</dbReference>
<dbReference type="GO" id="GO:0101031">
    <property type="term" value="C:protein folding chaperone complex"/>
    <property type="evidence" value="ECO:0007669"/>
    <property type="project" value="Ensembl"/>
</dbReference>
<dbReference type="GO" id="GO:0060090">
    <property type="term" value="F:molecular adaptor activity"/>
    <property type="evidence" value="ECO:0007669"/>
    <property type="project" value="Ensembl"/>
</dbReference>
<dbReference type="GO" id="GO:0051131">
    <property type="term" value="P:chaperone-mediated protein complex assembly"/>
    <property type="evidence" value="ECO:0000250"/>
    <property type="project" value="UniProtKB"/>
</dbReference>
<dbReference type="GO" id="GO:0007094">
    <property type="term" value="P:mitotic spindle assembly checkpoint signaling"/>
    <property type="evidence" value="ECO:0000314"/>
    <property type="project" value="MGI"/>
</dbReference>
<dbReference type="GO" id="GO:0043066">
    <property type="term" value="P:negative regulation of apoptotic process"/>
    <property type="evidence" value="ECO:0000314"/>
    <property type="project" value="MGI"/>
</dbReference>
<dbReference type="GO" id="GO:0051726">
    <property type="term" value="P:regulation of cell cycle"/>
    <property type="evidence" value="ECO:0000314"/>
    <property type="project" value="MGI"/>
</dbReference>
<dbReference type="FunFam" id="3.40.50.10900:FF:000001">
    <property type="entry name" value="Proteasome assembly chaperone 2"/>
    <property type="match status" value="1"/>
</dbReference>
<dbReference type="FunFam" id="3.40.50.10900:FF:000003">
    <property type="entry name" value="Proteasome assembly chaperone 2"/>
    <property type="match status" value="1"/>
</dbReference>
<dbReference type="Gene3D" id="3.40.50.10900">
    <property type="entry name" value="PAC-like subunit"/>
    <property type="match status" value="2"/>
</dbReference>
<dbReference type="InterPro" id="IPR019151">
    <property type="entry name" value="Proteasome_assmbl_chaperone_2"/>
</dbReference>
<dbReference type="InterPro" id="IPR016562">
    <property type="entry name" value="Proteasome_assmbl_chp_2_euk"/>
</dbReference>
<dbReference type="InterPro" id="IPR038389">
    <property type="entry name" value="PSMG2_sf"/>
</dbReference>
<dbReference type="PANTHER" id="PTHR12970">
    <property type="entry name" value="PROTEASOME ASSEMBLY CHAPERONE 2"/>
    <property type="match status" value="1"/>
</dbReference>
<dbReference type="PANTHER" id="PTHR12970:SF1">
    <property type="entry name" value="PROTEASOME ASSEMBLY CHAPERONE 2"/>
    <property type="match status" value="1"/>
</dbReference>
<dbReference type="Pfam" id="PF09754">
    <property type="entry name" value="PAC2"/>
    <property type="match status" value="1"/>
</dbReference>
<dbReference type="PIRSF" id="PIRSF010044">
    <property type="entry name" value="UCP010044"/>
    <property type="match status" value="1"/>
</dbReference>
<dbReference type="SUPFAM" id="SSF159659">
    <property type="entry name" value="Cgl1923-like"/>
    <property type="match status" value="1"/>
</dbReference>
<accession>Q9EST4</accession>
<accession>Q3TII5</accession>
<accession>Q3UXH7</accession>
<accession>Q8C1R5</accession>
<accession>Q91YJ0</accession>
<proteinExistence type="evidence at protein level"/>
<gene>
    <name evidence="15" type="primary">Psmg2</name>
    <name evidence="10" type="synonym">Clast3</name>
    <name evidence="15" type="synonym">Tnfsf5ip1</name>
</gene>
<sequence>MFVPCGESVPDLTNFTLLMPAVSVGNVGQLAIDLIISTLNMCKIGYFYTDCLVPMVGNNPYATEEENSNELSINTEVYSLPSKKLVVLQLRSIFIKYKSKSFCEKLLAWVESSGCARIIVLSSSHSYHRNDAQLRSTPFRYLLTPCLQKSVQNKIKSLNWLEMEKSRCIPEMSDSEFCIRIPGGGITKTLYDESCSKEIQMAVLLKFVSEGDNIPDAVSLVEYLNEWLQIIKPCNDGPMASALPWKIPSSWRLLFGSGLPPALF</sequence>
<comment type="function">
    <text evidence="1">Chaperone protein which promotes assembly of the 20S proteasome as part of a heterodimer with PSMG1. The PSMG1-PSMG2 heterodimer binds to the PSMA5 and PSMA7 proteasome subunits, promotes assembly of the proteasome alpha subunits into the heteroheptameric alpha ring and prevents alpha ring dimerization (By similarity).</text>
</comment>
<comment type="subunit">
    <text evidence="1">Forms a heterodimer with PSMG1. The PSMG1-PSMG2 heterodimer interacts directly with the PSMA5 and PSMA7 proteasome alpha subunits (By similarity).</text>
</comment>
<comment type="subcellular location">
    <subcellularLocation>
        <location evidence="3">Nucleus</location>
    </subcellularLocation>
</comment>
<comment type="alternative products">
    <event type="alternative splicing"/>
    <isoform>
        <id>Q9EST4-1</id>
        <name evidence="3">1</name>
        <sequence type="displayed"/>
    </isoform>
    <isoform>
        <id>Q9EST4-2</id>
        <name evidence="4 5">2</name>
        <sequence type="described" ref="VSP_052692 VSP_052693"/>
    </isoform>
    <isoform>
        <id>Q9EST4-3</id>
        <name evidence="5">3</name>
        <sequence type="described" ref="VSP_052691"/>
    </isoform>
</comment>
<comment type="developmental stage">
    <text evidence="3">Expression is elevated in proliferating cells and down-regulated in cells undergoing growth arrest. During the cell cycle, expression is low in G1-arrested cells, increases during S phase and remains high at G2-M phase.</text>
</comment>
<comment type="PTM">
    <text evidence="1">Degraded by the proteasome upon completion of 20S proteasome maturation.</text>
</comment>
<comment type="similarity">
    <text evidence="2">Belongs to the PSMG2 family.</text>
</comment>
<evidence type="ECO:0000250" key="1">
    <source>
        <dbReference type="UniProtKB" id="Q969U7"/>
    </source>
</evidence>
<evidence type="ECO:0000255" key="2"/>
<evidence type="ECO:0000269" key="3">
    <source>
    </source>
</evidence>
<evidence type="ECO:0000269" key="4">
    <source>
    </source>
</evidence>
<evidence type="ECO:0000269" key="5">
    <source>
    </source>
</evidence>
<evidence type="ECO:0000303" key="6">
    <source>
    </source>
</evidence>
<evidence type="ECO:0000303" key="7">
    <source>
    </source>
</evidence>
<evidence type="ECO:0000305" key="8"/>
<evidence type="ECO:0000312" key="9">
    <source>
        <dbReference type="EMBL" id="AAH16606.1"/>
    </source>
</evidence>
<evidence type="ECO:0000312" key="10">
    <source>
        <dbReference type="EMBL" id="BAB11962.1"/>
    </source>
</evidence>
<evidence type="ECO:0000312" key="11">
    <source>
        <dbReference type="EMBL" id="BAC25130.2"/>
    </source>
</evidence>
<evidence type="ECO:0000312" key="12">
    <source>
        <dbReference type="EMBL" id="BAC36869.1"/>
    </source>
</evidence>
<evidence type="ECO:0000312" key="13">
    <source>
        <dbReference type="EMBL" id="BAE22586.1"/>
    </source>
</evidence>
<evidence type="ECO:0000312" key="14">
    <source>
        <dbReference type="EMBL" id="BAE39861.1"/>
    </source>
</evidence>
<evidence type="ECO:0000312" key="15">
    <source>
        <dbReference type="MGI" id="MGI:1922901"/>
    </source>
</evidence>
<feature type="chain" id="PRO_0000322553" description="Proteasome assembly chaperone 2">
    <location>
        <begin position="1"/>
        <end position="264"/>
    </location>
</feature>
<feature type="modified residue" description="Phosphothreonine" evidence="1">
    <location>
        <position position="137"/>
    </location>
</feature>
<feature type="splice variant" id="VSP_052691" description="In isoform 3." evidence="7">
    <location>
        <begin position="1"/>
        <end position="40"/>
    </location>
</feature>
<feature type="splice variant" id="VSP_052692" description="In isoform 2." evidence="6 7">
    <original>YKSKSFCEKLLAWVESSGCARIIVLSSSHSYHRNDAQLRSTPFRYLLTPCLQKSVQNKIKSLNWL</original>
    <variation>VSMLAFLSSLMYGDRTQSLALRIKTNFIILFYILRKGLDLIKNFIIFQVCYYHFIFILKEIVDYS</variation>
    <location>
        <begin position="97"/>
        <end position="161"/>
    </location>
</feature>
<feature type="splice variant" id="VSP_052693" description="In isoform 2." evidence="6 7">
    <location>
        <begin position="162"/>
        <end position="264"/>
    </location>
</feature>
<feature type="sequence conflict" description="In Ref. 3; AAH16606." evidence="8" ref="3">
    <original>L</original>
    <variation>Q</variation>
    <location>
        <position position="34"/>
    </location>
</feature>
<organism>
    <name type="scientific">Mus musculus</name>
    <name type="common">Mouse</name>
    <dbReference type="NCBI Taxonomy" id="10090"/>
    <lineage>
        <taxon>Eukaryota</taxon>
        <taxon>Metazoa</taxon>
        <taxon>Chordata</taxon>
        <taxon>Craniata</taxon>
        <taxon>Vertebrata</taxon>
        <taxon>Euteleostomi</taxon>
        <taxon>Mammalia</taxon>
        <taxon>Eutheria</taxon>
        <taxon>Euarchontoglires</taxon>
        <taxon>Glires</taxon>
        <taxon>Rodentia</taxon>
        <taxon>Myomorpha</taxon>
        <taxon>Muroidea</taxon>
        <taxon>Muridae</taxon>
        <taxon>Murinae</taxon>
        <taxon>Mus</taxon>
        <taxon>Mus</taxon>
    </lineage>
</organism>
<protein>
    <recommendedName>
        <fullName>Proteasome assembly chaperone 2</fullName>
    </recommendedName>
    <alternativeName>
        <fullName>CD40 ligand-activated specific transcript 3</fullName>
    </alternativeName>
    <alternativeName>
        <fullName>Proteasome chaperone homolog 2</fullName>
        <shortName>Pba2</shortName>
    </alternativeName>
    <alternativeName>
        <fullName>Tumor necrosis factor superfamily member 5-induced protein 1</fullName>
    </alternativeName>
</protein>